<organism>
    <name type="scientific">Aspergillus fumigatus (strain ATCC MYA-4609 / CBS 101355 / FGSC A1100 / Af293)</name>
    <name type="common">Neosartorya fumigata</name>
    <dbReference type="NCBI Taxonomy" id="330879"/>
    <lineage>
        <taxon>Eukaryota</taxon>
        <taxon>Fungi</taxon>
        <taxon>Dikarya</taxon>
        <taxon>Ascomycota</taxon>
        <taxon>Pezizomycotina</taxon>
        <taxon>Eurotiomycetes</taxon>
        <taxon>Eurotiomycetidae</taxon>
        <taxon>Eurotiales</taxon>
        <taxon>Aspergillaceae</taxon>
        <taxon>Aspergillus</taxon>
        <taxon>Aspergillus subgen. Fumigati</taxon>
    </lineage>
</organism>
<gene>
    <name evidence="9" type="primary">mdr3</name>
    <name type="ORF">AFUA_3G03500</name>
</gene>
<sequence length="528" mass="57042">MLAMAASAEETNRQSNAGRRSVISPSEAPPEAEQSDVYQAPPPGLKEWLFILILCSTQLFVQGAFGYILIPLHIVGQTFGQGPSEATRMTWHVGGYSLTVGTFILIAGKLGDLYGSKRILVLGWAWFGVWSVIGGCSAFTHSPVFFDTARALQGIGPALLLPNALAIAGRTYPPGKKKNMIFSAFAVAAPLGCFTAGVVGSVFAQYVWWPWVMWTYSIGCFIIAAVGLWVIPSDYPRCQKAATLQFDYIGSVLGVAGLLLLNISWNQAPIDGWSTPYVYVLLIGGFLVLGLFELQERRAPGIRSWINFAMCLLWIQQCSSRQGPSQGILPALATPYLMAVITSGWLMAIACAAFLGGCILQSTAPVEQSYWMNTFWSFVIMAWGMDISFPASTTILSDAVPVKHQGASASLVNTVINYSIAIGLGIAGTVEAEVSHQGVNQLRGYRAALWSSVGLAALAFGIALVFAVCTFQEQRSSRKSSQEREQRACIEGCILGLTLTPDREWERVELGRLLSHVSQTGGLRSQSV</sequence>
<evidence type="ECO:0000255" key="1"/>
<evidence type="ECO:0000255" key="2">
    <source>
        <dbReference type="PROSITE-ProRule" id="PRU00498"/>
    </source>
</evidence>
<evidence type="ECO:0000256" key="3">
    <source>
        <dbReference type="SAM" id="MobiDB-lite"/>
    </source>
</evidence>
<evidence type="ECO:0000269" key="4">
    <source>
    </source>
</evidence>
<evidence type="ECO:0000269" key="5">
    <source>
    </source>
</evidence>
<evidence type="ECO:0000269" key="6">
    <source>
    </source>
</evidence>
<evidence type="ECO:0000269" key="7">
    <source>
    </source>
</evidence>
<evidence type="ECO:0000269" key="8">
    <source>
    </source>
</evidence>
<evidence type="ECO:0000303" key="9">
    <source>
    </source>
</evidence>
<evidence type="ECO:0000305" key="10"/>
<dbReference type="EMBL" id="AAHF01000010">
    <property type="protein sequence ID" value="EAL86632.1"/>
    <property type="molecule type" value="Genomic_DNA"/>
</dbReference>
<dbReference type="RefSeq" id="XP_748670.1">
    <property type="nucleotide sequence ID" value="XM_743577.1"/>
</dbReference>
<dbReference type="SMR" id="Q4WF45"/>
<dbReference type="STRING" id="330879.Q4WF45"/>
<dbReference type="GlyCosmos" id="Q4WF45">
    <property type="glycosylation" value="1 site, No reported glycans"/>
</dbReference>
<dbReference type="EnsemblFungi" id="EAL86632">
    <property type="protein sequence ID" value="EAL86632"/>
    <property type="gene ID" value="AFUA_3G03500"/>
</dbReference>
<dbReference type="GeneID" id="3506162"/>
<dbReference type="KEGG" id="afm:AFUA_3G03500"/>
<dbReference type="VEuPathDB" id="FungiDB:Afu3g03500"/>
<dbReference type="eggNOG" id="KOG0254">
    <property type="taxonomic scope" value="Eukaryota"/>
</dbReference>
<dbReference type="HOGENOM" id="CLU_000960_27_4_1"/>
<dbReference type="InParanoid" id="Q4WF45"/>
<dbReference type="OMA" id="VIMAWGM"/>
<dbReference type="OrthoDB" id="2428527at2759"/>
<dbReference type="Proteomes" id="UP000002530">
    <property type="component" value="Chromosome 3"/>
</dbReference>
<dbReference type="GO" id="GO:0016020">
    <property type="term" value="C:membrane"/>
    <property type="evidence" value="ECO:0000318"/>
    <property type="project" value="GO_Central"/>
</dbReference>
<dbReference type="GO" id="GO:0005886">
    <property type="term" value="C:plasma membrane"/>
    <property type="evidence" value="ECO:0007669"/>
    <property type="project" value="UniProtKB-SubCell"/>
</dbReference>
<dbReference type="GO" id="GO:0022857">
    <property type="term" value="F:transmembrane transporter activity"/>
    <property type="evidence" value="ECO:0007669"/>
    <property type="project" value="InterPro"/>
</dbReference>
<dbReference type="CDD" id="cd17476">
    <property type="entry name" value="MFS_Amf1_MDR_like"/>
    <property type="match status" value="1"/>
</dbReference>
<dbReference type="FunFam" id="1.20.1250.20:FF:001181">
    <property type="entry name" value="Major facilitator superfamily multidrug transporter mdr3"/>
    <property type="match status" value="1"/>
</dbReference>
<dbReference type="Gene3D" id="1.20.1250.20">
    <property type="entry name" value="MFS general substrate transporter like domains"/>
    <property type="match status" value="2"/>
</dbReference>
<dbReference type="InterPro" id="IPR011701">
    <property type="entry name" value="MFS"/>
</dbReference>
<dbReference type="InterPro" id="IPR020846">
    <property type="entry name" value="MFS_dom"/>
</dbReference>
<dbReference type="InterPro" id="IPR036259">
    <property type="entry name" value="MFS_trans_sf"/>
</dbReference>
<dbReference type="PANTHER" id="PTHR42718">
    <property type="entry name" value="MAJOR FACILITATOR SUPERFAMILY MULTIDRUG TRANSPORTER MFSC"/>
    <property type="match status" value="1"/>
</dbReference>
<dbReference type="PANTHER" id="PTHR42718:SF41">
    <property type="entry name" value="MFS TRANSPORTER OF UNKOWN SPECIFICITY (AFU_ORTHOLOGUE AFUA_5G09940)-RELATED"/>
    <property type="match status" value="1"/>
</dbReference>
<dbReference type="Pfam" id="PF07690">
    <property type="entry name" value="MFS_1"/>
    <property type="match status" value="2"/>
</dbReference>
<dbReference type="SUPFAM" id="SSF103473">
    <property type="entry name" value="MFS general substrate transporter"/>
    <property type="match status" value="1"/>
</dbReference>
<dbReference type="PROSITE" id="PS50850">
    <property type="entry name" value="MFS"/>
    <property type="match status" value="1"/>
</dbReference>
<name>MDR3_ASPFU</name>
<accession>Q4WF45</accession>
<feature type="chain" id="PRO_0000445107" description="Major facilitator superfamily multidrug transporter mdr3">
    <location>
        <begin position="1"/>
        <end position="528"/>
    </location>
</feature>
<feature type="transmembrane region" description="Helical" evidence="1">
    <location>
        <begin position="50"/>
        <end position="70"/>
    </location>
</feature>
<feature type="transmembrane region" description="Helical" evidence="1">
    <location>
        <begin position="91"/>
        <end position="111"/>
    </location>
</feature>
<feature type="transmembrane region" description="Helical" evidence="1">
    <location>
        <begin position="119"/>
        <end position="139"/>
    </location>
</feature>
<feature type="transmembrane region" description="Helical" evidence="1">
    <location>
        <begin position="149"/>
        <end position="169"/>
    </location>
</feature>
<feature type="transmembrane region" description="Helical" evidence="1">
    <location>
        <begin position="180"/>
        <end position="200"/>
    </location>
</feature>
<feature type="transmembrane region" description="Helical" evidence="1">
    <location>
        <begin position="211"/>
        <end position="231"/>
    </location>
</feature>
<feature type="transmembrane region" description="Helical" evidence="1">
    <location>
        <begin position="241"/>
        <end position="261"/>
    </location>
</feature>
<feature type="transmembrane region" description="Helical" evidence="1">
    <location>
        <begin position="272"/>
        <end position="292"/>
    </location>
</feature>
<feature type="transmembrane region" description="Helical" evidence="1">
    <location>
        <begin position="340"/>
        <end position="360"/>
    </location>
</feature>
<feature type="transmembrane region" description="Helical" evidence="1">
    <location>
        <begin position="375"/>
        <end position="395"/>
    </location>
</feature>
<feature type="transmembrane region" description="Helical" evidence="1">
    <location>
        <begin position="410"/>
        <end position="430"/>
    </location>
</feature>
<feature type="transmembrane region" description="Helical" evidence="1">
    <location>
        <begin position="448"/>
        <end position="468"/>
    </location>
</feature>
<feature type="region of interest" description="Disordered" evidence="3">
    <location>
        <begin position="1"/>
        <end position="37"/>
    </location>
</feature>
<feature type="glycosylation site" description="N-linked (GlcNAc...) asparagine" evidence="2">
    <location>
        <position position="262"/>
    </location>
</feature>
<proteinExistence type="evidence at transcript level"/>
<comment type="function">
    <text evidence="4">Major facilitator superfamily transporter that confers resistance to azoles such as itraconazole.</text>
</comment>
<comment type="subcellular location">
    <subcellularLocation>
        <location evidence="10">Cell membrane</location>
        <topology evidence="1">Multi-pass membrane protein</topology>
    </subcellularLocation>
</comment>
<comment type="induction">
    <text evidence="4 5 6 7 8">Expression is increased in clinical azole-resistant isolates and by the presence of itraconazole (PubMed:12709346, PubMed:15504870, PubMed:29124846). Expression is down-regulated by tetrandrine and posaconazole in a synergistic manner (PubMed:28080217). Expression is also induced upon amphotericin B treatment (PubMed:18838595).</text>
</comment>
<comment type="similarity">
    <text evidence="10">Belongs to the major facilitator superfamily.</text>
</comment>
<reference key="1">
    <citation type="journal article" date="2005" name="Nature">
        <title>Genomic sequence of the pathogenic and allergenic filamentous fungus Aspergillus fumigatus.</title>
        <authorList>
            <person name="Nierman W.C."/>
            <person name="Pain A."/>
            <person name="Anderson M.J."/>
            <person name="Wortman J.R."/>
            <person name="Kim H.S."/>
            <person name="Arroyo J."/>
            <person name="Berriman M."/>
            <person name="Abe K."/>
            <person name="Archer D.B."/>
            <person name="Bermejo C."/>
            <person name="Bennett J.W."/>
            <person name="Bowyer P."/>
            <person name="Chen D."/>
            <person name="Collins M."/>
            <person name="Coulsen R."/>
            <person name="Davies R."/>
            <person name="Dyer P.S."/>
            <person name="Farman M.L."/>
            <person name="Fedorova N."/>
            <person name="Fedorova N.D."/>
            <person name="Feldblyum T.V."/>
            <person name="Fischer R."/>
            <person name="Fosker N."/>
            <person name="Fraser A."/>
            <person name="Garcia J.L."/>
            <person name="Garcia M.J."/>
            <person name="Goble A."/>
            <person name="Goldman G.H."/>
            <person name="Gomi K."/>
            <person name="Griffith-Jones S."/>
            <person name="Gwilliam R."/>
            <person name="Haas B.J."/>
            <person name="Haas H."/>
            <person name="Harris D.E."/>
            <person name="Horiuchi H."/>
            <person name="Huang J."/>
            <person name="Humphray S."/>
            <person name="Jimenez J."/>
            <person name="Keller N."/>
            <person name="Khouri H."/>
            <person name="Kitamoto K."/>
            <person name="Kobayashi T."/>
            <person name="Konzack S."/>
            <person name="Kulkarni R."/>
            <person name="Kumagai T."/>
            <person name="Lafton A."/>
            <person name="Latge J.-P."/>
            <person name="Li W."/>
            <person name="Lord A."/>
            <person name="Lu C."/>
            <person name="Majoros W.H."/>
            <person name="May G.S."/>
            <person name="Miller B.L."/>
            <person name="Mohamoud Y."/>
            <person name="Molina M."/>
            <person name="Monod M."/>
            <person name="Mouyna I."/>
            <person name="Mulligan S."/>
            <person name="Murphy L.D."/>
            <person name="O'Neil S."/>
            <person name="Paulsen I."/>
            <person name="Penalva M.A."/>
            <person name="Pertea M."/>
            <person name="Price C."/>
            <person name="Pritchard B.L."/>
            <person name="Quail M.A."/>
            <person name="Rabbinowitsch E."/>
            <person name="Rawlins N."/>
            <person name="Rajandream M.A."/>
            <person name="Reichard U."/>
            <person name="Renauld H."/>
            <person name="Robson G.D."/>
            <person name="Rodriguez de Cordoba S."/>
            <person name="Rodriguez-Pena J.M."/>
            <person name="Ronning C.M."/>
            <person name="Rutter S."/>
            <person name="Salzberg S.L."/>
            <person name="Sanchez M."/>
            <person name="Sanchez-Ferrero J.C."/>
            <person name="Saunders D."/>
            <person name="Seeger K."/>
            <person name="Squares R."/>
            <person name="Squares S."/>
            <person name="Takeuchi M."/>
            <person name="Tekaia F."/>
            <person name="Turner G."/>
            <person name="Vazquez de Aldana C.R."/>
            <person name="Weidman J."/>
            <person name="White O."/>
            <person name="Woodward J.R."/>
            <person name="Yu J.-H."/>
            <person name="Fraser C.M."/>
            <person name="Galagan J.E."/>
            <person name="Asai K."/>
            <person name="Machida M."/>
            <person name="Hall N."/>
            <person name="Barrell B.G."/>
            <person name="Denning D.W."/>
        </authorList>
    </citation>
    <scope>NUCLEOTIDE SEQUENCE [LARGE SCALE GENOMIC DNA]</scope>
    <source>
        <strain>ATCC MYA-4609 / CBS 101355 / FGSC A1100 / Af293</strain>
    </source>
</reference>
<reference key="2">
    <citation type="journal article" date="2003" name="Antimicrob. Agents Chemother.">
        <title>Multiple resistance mechanisms among Aspergillus fumigatus mutants with high-level resistance to itraconazole.</title>
        <authorList>
            <person name="Nascimento A.M."/>
            <person name="Goldman G.H."/>
            <person name="Park S."/>
            <person name="Marras S.A."/>
            <person name="Delmas G."/>
            <person name="Oza U."/>
            <person name="Lolans K."/>
            <person name="Dudley M.N."/>
            <person name="Mann P.A."/>
            <person name="Perlin D.S."/>
        </authorList>
    </citation>
    <scope>INDUCTION</scope>
    <scope>FUNCTION</scope>
</reference>
<reference key="3">
    <citation type="journal article" date="2004" name="Antimicrob. Agents Chemother.">
        <title>In vitro evolution of itraconazole resistance in Aspergillus fumigatus involves multiple mechanisms of resistance.</title>
        <authorList>
            <person name="da Silva Ferreira M.E."/>
            <person name="Capellaro J.L."/>
            <person name="dos Reis Marques E."/>
            <person name="Malavazi I."/>
            <person name="Perlin D."/>
            <person name="Park S."/>
            <person name="Anderson J.B."/>
            <person name="Colombo A.L."/>
            <person name="Arthington-Skaggs B.A."/>
            <person name="Goldman M.H."/>
            <person name="Goldman G.H."/>
        </authorList>
    </citation>
    <scope>INDUCTION</scope>
</reference>
<reference key="4">
    <citation type="journal article" date="2008" name="Antimicrob. Agents Chemother.">
        <title>Proteomic and transcriptomic analysis of Aspergillus fumigatus on exposure to amphotericin B.</title>
        <authorList>
            <person name="Gautam P."/>
            <person name="Shankar J."/>
            <person name="Madan T."/>
            <person name="Sirdeshmukh R."/>
            <person name="Sundaram C.S."/>
            <person name="Gade W.N."/>
            <person name="Basir S.F."/>
            <person name="Sarma P.U."/>
        </authorList>
    </citation>
    <scope>INDUCTION</scope>
</reference>
<reference key="5">
    <citation type="journal article" date="2017" name="Microb. Drug Resist.">
        <title>Synergistic effects of tetrandrine with posaconazole against Aspergillus fumigatus.</title>
        <authorList>
            <person name="Li S.X."/>
            <person name="Song Y.J."/>
            <person name="Jiang L."/>
            <person name="Zhao Y.J."/>
            <person name="Guo H."/>
            <person name="Li D.M."/>
            <person name="Zhu K.J."/>
            <person name="Zhang H."/>
        </authorList>
    </citation>
    <scope>INDUCTION</scope>
</reference>
<reference key="6">
    <citation type="journal article" date="2018" name="Environ. Microbiol.">
        <title>Prevalence, mechanisms and genetic relatedness of the human pathogenic fungus Aspergillus fumigatus exhibiting resistance to medical azoles in the environment of Taiwan.</title>
        <authorList>
            <person name="Wang H.C."/>
            <person name="Huang J.C."/>
            <person name="Lin Y.H."/>
            <person name="Chen Y.H."/>
            <person name="Hsieh M.I."/>
            <person name="Choi P.C."/>
            <person name="Lo H.J."/>
            <person name="Liu W.L."/>
            <person name="Hsu C.S."/>
            <person name="Shih H.I."/>
            <person name="Wu C.J."/>
            <person name="Chen Y.C."/>
        </authorList>
    </citation>
    <scope>INDUCTION</scope>
</reference>
<keyword id="KW-1003">Cell membrane</keyword>
<keyword id="KW-0325">Glycoprotein</keyword>
<keyword id="KW-0472">Membrane</keyword>
<keyword id="KW-1185">Reference proteome</keyword>
<keyword id="KW-0812">Transmembrane</keyword>
<keyword id="KW-1133">Transmembrane helix</keyword>
<keyword id="KW-0813">Transport</keyword>
<protein>
    <recommendedName>
        <fullName evidence="9">Major facilitator superfamily multidrug transporter mdr3</fullName>
    </recommendedName>
</protein>